<comment type="function">
    <text evidence="1">Component of the cytosolic iron-sulfur (Fe/S) protein assembly (CIA) machinery. Required for maturation of extramitochondrial Fe-S proteins. The NBP35-CFD1 heterotetramer forms a Fe-S scaffold complex, mediating the de novo assembly of an Fe-S cluster and its transfer to target apoproteins. Required for biogenesis and export of both ribosomal subunits, which may reflect a role in assembly of the Fe/S clusters in RLI1, a protein which performs rRNA processing and ribosome export.</text>
</comment>
<comment type="cofactor">
    <cofactor evidence="1">
        <name>[4Fe-4S] cluster</name>
        <dbReference type="ChEBI" id="CHEBI:49883"/>
    </cofactor>
    <text evidence="1">Binds 4 [4Fe-4S] clusters per heterotetramer. Contains two stable clusters in the N-termini of NBP35 and two labile, bridging clusters between subunits of the NBP35-CFD1 heterotetramer.</text>
</comment>
<comment type="subunit">
    <text evidence="1">Heterotetramer of 2 NBP35 and 2 CFD1 chains.</text>
</comment>
<comment type="subcellular location">
    <subcellularLocation>
        <location evidence="1">Cytoplasm</location>
    </subcellularLocation>
    <subcellularLocation>
        <location evidence="1">Nucleus</location>
    </subcellularLocation>
</comment>
<comment type="similarity">
    <text evidence="1">Belongs to the Mrp/NBP35 ATP-binding proteins family. NUBP1/NBP35 subfamily.</text>
</comment>
<comment type="sequence caution" evidence="2">
    <conflict type="erroneous initiation">
        <sequence resource="EMBL-CDS" id="AAS53312"/>
    </conflict>
    <text>Extended N-terminus.</text>
</comment>
<protein>
    <recommendedName>
        <fullName evidence="1">Cytosolic Fe-S cluster assembly factor NBP35</fullName>
    </recommendedName>
    <alternativeName>
        <fullName evidence="1">Nucleotide-binding protein 35</fullName>
    </alternativeName>
</protein>
<sequence length="333" mass="35285">MQTSAEMGGIIEAMPALAQDGYALEQAPPEHCPGPASENAGKGDACQGCANKDICESLPKGPDPDVALITQNLAPVRHKVLVLSGKGGVGKSTFSAMLGWALSADEALQVGVMDLDICGPSLPHMLGCVNETVHESSVGWTPVYVADNLAAMSIQFMLPEDDSAVIWRGAKKNALIKRFLKDVYWDELDYLVVDTPPGTSDEHITINTLLKESGIDGALVVTTPQEVALLDVRKELDFCRKAGIRVLGLVENMSGFVCPSCENESTIFKPTTGGGRALCEELGIKFLGAVPIDPRIGRCCDSGESFLDAYPDSPASTAIMHVVEALRDAVGDV</sequence>
<accession>Q754X6</accession>
<gene>
    <name evidence="1" type="primary">NBP35</name>
    <name type="ordered locus">AFL060W</name>
</gene>
<keyword id="KW-0004">4Fe-4S</keyword>
<keyword id="KW-0067">ATP-binding</keyword>
<keyword id="KW-0963">Cytoplasm</keyword>
<keyword id="KW-0408">Iron</keyword>
<keyword id="KW-0411">Iron-sulfur</keyword>
<keyword id="KW-0479">Metal-binding</keyword>
<keyword id="KW-0547">Nucleotide-binding</keyword>
<keyword id="KW-0539">Nucleus</keyword>
<keyword id="KW-1185">Reference proteome</keyword>
<dbReference type="EMBL" id="AE016819">
    <property type="protein sequence ID" value="AAS53312.2"/>
    <property type="status" value="ALT_INIT"/>
    <property type="molecule type" value="Genomic_DNA"/>
</dbReference>
<dbReference type="RefSeq" id="NP_985488.2">
    <property type="nucleotide sequence ID" value="NM_210842.2"/>
</dbReference>
<dbReference type="SMR" id="Q754X6"/>
<dbReference type="FunCoup" id="Q754X6">
    <property type="interactions" value="606"/>
</dbReference>
<dbReference type="STRING" id="284811.Q754X6"/>
<dbReference type="GeneID" id="4621719"/>
<dbReference type="KEGG" id="ago:AGOS_AFL060W"/>
<dbReference type="eggNOG" id="KOG3022">
    <property type="taxonomic scope" value="Eukaryota"/>
</dbReference>
<dbReference type="InParanoid" id="Q754X6"/>
<dbReference type="OrthoDB" id="1741334at2759"/>
<dbReference type="Proteomes" id="UP000000591">
    <property type="component" value="Chromosome VI"/>
</dbReference>
<dbReference type="GO" id="GO:0005829">
    <property type="term" value="C:cytosol"/>
    <property type="evidence" value="ECO:0000318"/>
    <property type="project" value="GO_Central"/>
</dbReference>
<dbReference type="GO" id="GO:0005634">
    <property type="term" value="C:nucleus"/>
    <property type="evidence" value="ECO:0007669"/>
    <property type="project" value="UniProtKB-SubCell"/>
</dbReference>
<dbReference type="GO" id="GO:0051539">
    <property type="term" value="F:4 iron, 4 sulfur cluster binding"/>
    <property type="evidence" value="ECO:0007669"/>
    <property type="project" value="UniProtKB-UniRule"/>
</dbReference>
<dbReference type="GO" id="GO:0005524">
    <property type="term" value="F:ATP binding"/>
    <property type="evidence" value="ECO:0007669"/>
    <property type="project" value="UniProtKB-KW"/>
</dbReference>
<dbReference type="GO" id="GO:0140663">
    <property type="term" value="F:ATP-dependent FeS chaperone activity"/>
    <property type="evidence" value="ECO:0007669"/>
    <property type="project" value="InterPro"/>
</dbReference>
<dbReference type="GO" id="GO:0051536">
    <property type="term" value="F:iron-sulfur cluster binding"/>
    <property type="evidence" value="ECO:0000318"/>
    <property type="project" value="GO_Central"/>
</dbReference>
<dbReference type="GO" id="GO:0046872">
    <property type="term" value="F:metal ion binding"/>
    <property type="evidence" value="ECO:0007669"/>
    <property type="project" value="UniProtKB-KW"/>
</dbReference>
<dbReference type="GO" id="GO:0016226">
    <property type="term" value="P:iron-sulfur cluster assembly"/>
    <property type="evidence" value="ECO:0000318"/>
    <property type="project" value="GO_Central"/>
</dbReference>
<dbReference type="CDD" id="cd02037">
    <property type="entry name" value="Mrp_NBP35"/>
    <property type="match status" value="1"/>
</dbReference>
<dbReference type="FunFam" id="3.40.50.300:FF:000427">
    <property type="entry name" value="Cytosolic Fe-S cluster assembly factor NUBP1"/>
    <property type="match status" value="1"/>
</dbReference>
<dbReference type="Gene3D" id="3.40.50.300">
    <property type="entry name" value="P-loop containing nucleotide triphosphate hydrolases"/>
    <property type="match status" value="1"/>
</dbReference>
<dbReference type="HAMAP" id="MF_02040">
    <property type="entry name" value="Mrp_NBP35"/>
    <property type="match status" value="1"/>
</dbReference>
<dbReference type="HAMAP" id="MF_03038">
    <property type="entry name" value="NUBP1"/>
    <property type="match status" value="1"/>
</dbReference>
<dbReference type="InterPro" id="IPR000808">
    <property type="entry name" value="Mrp-like_CS"/>
</dbReference>
<dbReference type="InterPro" id="IPR019591">
    <property type="entry name" value="Mrp/NBP35_ATP-bd"/>
</dbReference>
<dbReference type="InterPro" id="IPR028601">
    <property type="entry name" value="NUBP1/Nbp35"/>
</dbReference>
<dbReference type="InterPro" id="IPR027417">
    <property type="entry name" value="P-loop_NTPase"/>
</dbReference>
<dbReference type="InterPro" id="IPR033756">
    <property type="entry name" value="YlxH/NBP35"/>
</dbReference>
<dbReference type="PANTHER" id="PTHR23264:SF35">
    <property type="entry name" value="CYTOSOLIC FE-S CLUSTER ASSEMBLY FACTOR NUBP1"/>
    <property type="match status" value="1"/>
</dbReference>
<dbReference type="PANTHER" id="PTHR23264">
    <property type="entry name" value="NUCLEOTIDE-BINDING PROTEIN NBP35 YEAST -RELATED"/>
    <property type="match status" value="1"/>
</dbReference>
<dbReference type="Pfam" id="PF10609">
    <property type="entry name" value="ParA"/>
    <property type="match status" value="1"/>
</dbReference>
<dbReference type="SUPFAM" id="SSF52540">
    <property type="entry name" value="P-loop containing nucleoside triphosphate hydrolases"/>
    <property type="match status" value="1"/>
</dbReference>
<dbReference type="PROSITE" id="PS01215">
    <property type="entry name" value="MRP"/>
    <property type="match status" value="1"/>
</dbReference>
<evidence type="ECO:0000255" key="1">
    <source>
        <dbReference type="HAMAP-Rule" id="MF_03038"/>
    </source>
</evidence>
<evidence type="ECO:0000305" key="2"/>
<feature type="chain" id="PRO_0000278886" description="Cytosolic Fe-S cluster assembly factor NBP35">
    <location>
        <begin position="1"/>
        <end position="333"/>
    </location>
</feature>
<feature type="binding site" evidence="1">
    <location>
        <position position="32"/>
    </location>
    <ligand>
        <name>[4Fe-4S] cluster</name>
        <dbReference type="ChEBI" id="CHEBI:49883"/>
        <label>1</label>
    </ligand>
</feature>
<feature type="binding site" evidence="1">
    <location>
        <position position="46"/>
    </location>
    <ligand>
        <name>[4Fe-4S] cluster</name>
        <dbReference type="ChEBI" id="CHEBI:49883"/>
        <label>1</label>
    </ligand>
</feature>
<feature type="binding site" evidence="1">
    <location>
        <position position="49"/>
    </location>
    <ligand>
        <name>[4Fe-4S] cluster</name>
        <dbReference type="ChEBI" id="CHEBI:49883"/>
        <label>1</label>
    </ligand>
</feature>
<feature type="binding site" evidence="1">
    <location>
        <position position="55"/>
    </location>
    <ligand>
        <name>[4Fe-4S] cluster</name>
        <dbReference type="ChEBI" id="CHEBI:49883"/>
        <label>1</label>
    </ligand>
</feature>
<feature type="binding site" evidence="1">
    <location>
        <begin position="85"/>
        <end position="92"/>
    </location>
    <ligand>
        <name>ATP</name>
        <dbReference type="ChEBI" id="CHEBI:30616"/>
    </ligand>
</feature>
<feature type="binding site" evidence="1">
    <location>
        <position position="258"/>
    </location>
    <ligand>
        <name>[4Fe-4S] cluster</name>
        <dbReference type="ChEBI" id="CHEBI:49883"/>
        <label>2</label>
        <note>ligand shared with heterodimeric partner</note>
    </ligand>
</feature>
<feature type="binding site" evidence="1">
    <location>
        <position position="261"/>
    </location>
    <ligand>
        <name>[4Fe-4S] cluster</name>
        <dbReference type="ChEBI" id="CHEBI:49883"/>
        <label>2</label>
        <note>ligand shared with heterodimeric partner</note>
    </ligand>
</feature>
<name>NBP35_EREGS</name>
<proteinExistence type="inferred from homology"/>
<organism>
    <name type="scientific">Eremothecium gossypii (strain ATCC 10895 / CBS 109.51 / FGSC 9923 / NRRL Y-1056)</name>
    <name type="common">Yeast</name>
    <name type="synonym">Ashbya gossypii</name>
    <dbReference type="NCBI Taxonomy" id="284811"/>
    <lineage>
        <taxon>Eukaryota</taxon>
        <taxon>Fungi</taxon>
        <taxon>Dikarya</taxon>
        <taxon>Ascomycota</taxon>
        <taxon>Saccharomycotina</taxon>
        <taxon>Saccharomycetes</taxon>
        <taxon>Saccharomycetales</taxon>
        <taxon>Saccharomycetaceae</taxon>
        <taxon>Eremothecium</taxon>
    </lineage>
</organism>
<reference key="1">
    <citation type="journal article" date="2004" name="Science">
        <title>The Ashbya gossypii genome as a tool for mapping the ancient Saccharomyces cerevisiae genome.</title>
        <authorList>
            <person name="Dietrich F.S."/>
            <person name="Voegeli S."/>
            <person name="Brachat S."/>
            <person name="Lerch A."/>
            <person name="Gates K."/>
            <person name="Steiner S."/>
            <person name="Mohr C."/>
            <person name="Poehlmann R."/>
            <person name="Luedi P."/>
            <person name="Choi S."/>
            <person name="Wing R.A."/>
            <person name="Flavier A."/>
            <person name="Gaffney T.D."/>
            <person name="Philippsen P."/>
        </authorList>
    </citation>
    <scope>NUCLEOTIDE SEQUENCE [LARGE SCALE GENOMIC DNA]</scope>
    <source>
        <strain>ATCC 10895 / CBS 109.51 / FGSC 9923 / NRRL Y-1056</strain>
    </source>
</reference>
<reference key="2">
    <citation type="journal article" date="2013" name="G3 (Bethesda)">
        <title>Genomes of Ashbya fungi isolated from insects reveal four mating-type loci, numerous translocations, lack of transposons, and distinct gene duplications.</title>
        <authorList>
            <person name="Dietrich F.S."/>
            <person name="Voegeli S."/>
            <person name="Kuo S."/>
            <person name="Philippsen P."/>
        </authorList>
    </citation>
    <scope>GENOME REANNOTATION</scope>
    <scope>SEQUENCE REVISION TO 31 AND 37</scope>
    <source>
        <strain>ATCC 10895 / CBS 109.51 / FGSC 9923 / NRRL Y-1056</strain>
    </source>
</reference>